<organism>
    <name type="scientific">Bradyrhizobium sp. (strain BTAi1 / ATCC BAA-1182)</name>
    <dbReference type="NCBI Taxonomy" id="288000"/>
    <lineage>
        <taxon>Bacteria</taxon>
        <taxon>Pseudomonadati</taxon>
        <taxon>Pseudomonadota</taxon>
        <taxon>Alphaproteobacteria</taxon>
        <taxon>Hyphomicrobiales</taxon>
        <taxon>Nitrobacteraceae</taxon>
        <taxon>Bradyrhizobium</taxon>
    </lineage>
</organism>
<dbReference type="EC" id="6.3.3.3" evidence="1"/>
<dbReference type="EMBL" id="CP000494">
    <property type="protein sequence ID" value="ABQ34911.1"/>
    <property type="molecule type" value="Genomic_DNA"/>
</dbReference>
<dbReference type="RefSeq" id="WP_012042934.1">
    <property type="nucleotide sequence ID" value="NC_009485.1"/>
</dbReference>
<dbReference type="SMR" id="A5EFG7"/>
<dbReference type="STRING" id="288000.BBta_2778"/>
<dbReference type="KEGG" id="bbt:BBta_2778"/>
<dbReference type="eggNOG" id="COG0132">
    <property type="taxonomic scope" value="Bacteria"/>
</dbReference>
<dbReference type="HOGENOM" id="CLU_072551_2_0_5"/>
<dbReference type="OrthoDB" id="9802097at2"/>
<dbReference type="UniPathway" id="UPA00078">
    <property type="reaction ID" value="UER00161"/>
</dbReference>
<dbReference type="Proteomes" id="UP000000246">
    <property type="component" value="Chromosome"/>
</dbReference>
<dbReference type="GO" id="GO:0005829">
    <property type="term" value="C:cytosol"/>
    <property type="evidence" value="ECO:0007669"/>
    <property type="project" value="TreeGrafter"/>
</dbReference>
<dbReference type="GO" id="GO:0005524">
    <property type="term" value="F:ATP binding"/>
    <property type="evidence" value="ECO:0007669"/>
    <property type="project" value="UniProtKB-UniRule"/>
</dbReference>
<dbReference type="GO" id="GO:0004141">
    <property type="term" value="F:dethiobiotin synthase activity"/>
    <property type="evidence" value="ECO:0007669"/>
    <property type="project" value="UniProtKB-UniRule"/>
</dbReference>
<dbReference type="GO" id="GO:0000287">
    <property type="term" value="F:magnesium ion binding"/>
    <property type="evidence" value="ECO:0007669"/>
    <property type="project" value="UniProtKB-UniRule"/>
</dbReference>
<dbReference type="GO" id="GO:0009102">
    <property type="term" value="P:biotin biosynthetic process"/>
    <property type="evidence" value="ECO:0007669"/>
    <property type="project" value="UniProtKB-UniRule"/>
</dbReference>
<dbReference type="CDD" id="cd03109">
    <property type="entry name" value="DTBS"/>
    <property type="match status" value="1"/>
</dbReference>
<dbReference type="Gene3D" id="3.40.50.300">
    <property type="entry name" value="P-loop containing nucleotide triphosphate hydrolases"/>
    <property type="match status" value="1"/>
</dbReference>
<dbReference type="HAMAP" id="MF_00336">
    <property type="entry name" value="BioD"/>
    <property type="match status" value="1"/>
</dbReference>
<dbReference type="InterPro" id="IPR004472">
    <property type="entry name" value="DTB_synth_BioD"/>
</dbReference>
<dbReference type="InterPro" id="IPR027417">
    <property type="entry name" value="P-loop_NTPase"/>
</dbReference>
<dbReference type="NCBIfam" id="TIGR00347">
    <property type="entry name" value="bioD"/>
    <property type="match status" value="1"/>
</dbReference>
<dbReference type="PANTHER" id="PTHR43210:SF2">
    <property type="entry name" value="ATP-DEPENDENT DETHIOBIOTIN SYNTHETASE BIOD 2"/>
    <property type="match status" value="1"/>
</dbReference>
<dbReference type="PANTHER" id="PTHR43210">
    <property type="entry name" value="DETHIOBIOTIN SYNTHETASE"/>
    <property type="match status" value="1"/>
</dbReference>
<dbReference type="Pfam" id="PF13500">
    <property type="entry name" value="AAA_26"/>
    <property type="match status" value="1"/>
</dbReference>
<dbReference type="PIRSF" id="PIRSF006755">
    <property type="entry name" value="DTB_synth"/>
    <property type="match status" value="1"/>
</dbReference>
<dbReference type="SUPFAM" id="SSF52540">
    <property type="entry name" value="P-loop containing nucleoside triphosphate hydrolases"/>
    <property type="match status" value="1"/>
</dbReference>
<name>BIOD_BRASB</name>
<feature type="chain" id="PRO_0000302483" description="ATP-dependent dethiobiotin synthetase BioD">
    <location>
        <begin position="1"/>
        <end position="210"/>
    </location>
</feature>
<feature type="active site" evidence="1">
    <location>
        <position position="33"/>
    </location>
</feature>
<feature type="binding site" evidence="1">
    <location>
        <begin position="13"/>
        <end position="18"/>
    </location>
    <ligand>
        <name>ATP</name>
        <dbReference type="ChEBI" id="CHEBI:30616"/>
    </ligand>
</feature>
<feature type="binding site" evidence="1">
    <location>
        <position position="17"/>
    </location>
    <ligand>
        <name>Mg(2+)</name>
        <dbReference type="ChEBI" id="CHEBI:18420"/>
    </ligand>
</feature>
<feature type="binding site" evidence="1">
    <location>
        <begin position="101"/>
        <end position="104"/>
    </location>
    <ligand>
        <name>ATP</name>
        <dbReference type="ChEBI" id="CHEBI:30616"/>
    </ligand>
</feature>
<feature type="binding site" evidence="1">
    <location>
        <position position="101"/>
    </location>
    <ligand>
        <name>Mg(2+)</name>
        <dbReference type="ChEBI" id="CHEBI:18420"/>
    </ligand>
</feature>
<feature type="binding site" evidence="1">
    <location>
        <begin position="185"/>
        <end position="187"/>
    </location>
    <ligand>
        <name>ATP</name>
        <dbReference type="ChEBI" id="CHEBI:30616"/>
    </ligand>
</feature>
<keyword id="KW-0067">ATP-binding</keyword>
<keyword id="KW-0093">Biotin biosynthesis</keyword>
<keyword id="KW-0963">Cytoplasm</keyword>
<keyword id="KW-0436">Ligase</keyword>
<keyword id="KW-0460">Magnesium</keyword>
<keyword id="KW-0479">Metal-binding</keyword>
<keyword id="KW-0547">Nucleotide-binding</keyword>
<keyword id="KW-1185">Reference proteome</keyword>
<comment type="function">
    <text evidence="1">Catalyzes a mechanistically unusual reaction, the ATP-dependent insertion of CO2 between the N7 and N8 nitrogen atoms of 7,8-diaminopelargonic acid (DAPA, also called 7,8-diammoniononanoate) to form a ureido ring.</text>
</comment>
<comment type="catalytic activity">
    <reaction evidence="1">
        <text>(7R,8S)-7,8-diammoniononanoate + CO2 + ATP = (4R,5S)-dethiobiotin + ADP + phosphate + 3 H(+)</text>
        <dbReference type="Rhea" id="RHEA:15805"/>
        <dbReference type="ChEBI" id="CHEBI:15378"/>
        <dbReference type="ChEBI" id="CHEBI:16526"/>
        <dbReference type="ChEBI" id="CHEBI:30616"/>
        <dbReference type="ChEBI" id="CHEBI:43474"/>
        <dbReference type="ChEBI" id="CHEBI:149469"/>
        <dbReference type="ChEBI" id="CHEBI:149473"/>
        <dbReference type="ChEBI" id="CHEBI:456216"/>
        <dbReference type="EC" id="6.3.3.3"/>
    </reaction>
</comment>
<comment type="cofactor">
    <cofactor evidence="1">
        <name>Mg(2+)</name>
        <dbReference type="ChEBI" id="CHEBI:18420"/>
    </cofactor>
</comment>
<comment type="pathway">
    <text evidence="1">Cofactor biosynthesis; biotin biosynthesis; biotin from 7,8-diaminononanoate: step 1/2.</text>
</comment>
<comment type="subunit">
    <text evidence="1">Homodimer.</text>
</comment>
<comment type="subcellular location">
    <subcellularLocation>
        <location evidence="1">Cytoplasm</location>
    </subcellularLocation>
</comment>
<comment type="similarity">
    <text evidence="1">Belongs to the dethiobiotin synthetase family.</text>
</comment>
<reference key="1">
    <citation type="journal article" date="2007" name="Science">
        <title>Legumes symbioses: absence of nod genes in photosynthetic bradyrhizobia.</title>
        <authorList>
            <person name="Giraud E."/>
            <person name="Moulin L."/>
            <person name="Vallenet D."/>
            <person name="Barbe V."/>
            <person name="Cytryn E."/>
            <person name="Avarre J.-C."/>
            <person name="Jaubert M."/>
            <person name="Simon D."/>
            <person name="Cartieaux F."/>
            <person name="Prin Y."/>
            <person name="Bena G."/>
            <person name="Hannibal L."/>
            <person name="Fardoux J."/>
            <person name="Kojadinovic M."/>
            <person name="Vuillet L."/>
            <person name="Lajus A."/>
            <person name="Cruveiller S."/>
            <person name="Rouy Z."/>
            <person name="Mangenot S."/>
            <person name="Segurens B."/>
            <person name="Dossat C."/>
            <person name="Franck W.L."/>
            <person name="Chang W.-S."/>
            <person name="Saunders E."/>
            <person name="Bruce D."/>
            <person name="Richardson P."/>
            <person name="Normand P."/>
            <person name="Dreyfus B."/>
            <person name="Pignol D."/>
            <person name="Stacey G."/>
            <person name="Emerich D."/>
            <person name="Vermeglio A."/>
            <person name="Medigue C."/>
            <person name="Sadowsky M."/>
        </authorList>
    </citation>
    <scope>NUCLEOTIDE SEQUENCE [LARGE SCALE GENOMIC DNA]</scope>
    <source>
        <strain>BTAi1 / ATCC BAA-1182</strain>
    </source>
</reference>
<accession>A5EFG7</accession>
<evidence type="ECO:0000255" key="1">
    <source>
        <dbReference type="HAMAP-Rule" id="MF_00336"/>
    </source>
</evidence>
<sequence>MAQRIVVTGTDTGIGKTVFAAALTDLLGACYWKPVQAGLAEETDSHRVQRLADLADDRLVPEAYRLAAPASPHLAARLDGVSIDPLCLNPPDTGGRPLVIEGAGGVMVPLTADTLYLDVFARWQWPVVLCARTSLGTINHSLLSLAALRSRGIAVLGVAFIGDANADSEETICRLGAVKRLGRLPWLPELTARSLQHAVAAEFRRADFAP</sequence>
<gene>
    <name evidence="1" type="primary">bioD</name>
    <name type="ordered locus">BBta_2778</name>
</gene>
<proteinExistence type="inferred from homology"/>
<protein>
    <recommendedName>
        <fullName evidence="1">ATP-dependent dethiobiotin synthetase BioD</fullName>
        <ecNumber evidence="1">6.3.3.3</ecNumber>
    </recommendedName>
    <alternativeName>
        <fullName evidence="1">DTB synthetase</fullName>
        <shortName evidence="1">DTBS</shortName>
    </alternativeName>
    <alternativeName>
        <fullName evidence="1">Dethiobiotin synthase</fullName>
    </alternativeName>
</protein>